<proteinExistence type="evidence at protein level"/>
<keyword id="KW-0025">Alternative splicing</keyword>
<keyword id="KW-0067">ATP-binding</keyword>
<keyword id="KW-0418">Kinase</keyword>
<keyword id="KW-0547">Nucleotide-binding</keyword>
<keyword id="KW-1185">Reference proteome</keyword>
<keyword id="KW-0723">Serine/threonine-protein kinase</keyword>
<keyword id="KW-0808">Transferase</keyword>
<accession>P43291</accession>
<name>SRK2A_ARATH</name>
<gene>
    <name type="primary">SRK2A</name>
    <name type="synonym">ASK1</name>
    <name type="synonym">OSKL7</name>
    <name type="synonym">SNRK2.4</name>
    <name type="ordered locus">At1g10940</name>
    <name type="ORF">T19D16.14</name>
</gene>
<organism>
    <name type="scientific">Arabidopsis thaliana</name>
    <name type="common">Mouse-ear cress</name>
    <dbReference type="NCBI Taxonomy" id="3702"/>
    <lineage>
        <taxon>Eukaryota</taxon>
        <taxon>Viridiplantae</taxon>
        <taxon>Streptophyta</taxon>
        <taxon>Embryophyta</taxon>
        <taxon>Tracheophyta</taxon>
        <taxon>Spermatophyta</taxon>
        <taxon>Magnoliopsida</taxon>
        <taxon>eudicotyledons</taxon>
        <taxon>Gunneridae</taxon>
        <taxon>Pentapetalae</taxon>
        <taxon>rosids</taxon>
        <taxon>malvids</taxon>
        <taxon>Brassicales</taxon>
        <taxon>Brassicaceae</taxon>
        <taxon>Camelineae</taxon>
        <taxon>Arabidopsis</taxon>
    </lineage>
</organism>
<feature type="chain" id="PRO_0000085636" description="Serine/threonine-protein kinase SRK2A">
    <location>
        <begin position="1"/>
        <end position="363"/>
    </location>
</feature>
<feature type="domain" description="Protein kinase" evidence="1">
    <location>
        <begin position="4"/>
        <end position="260"/>
    </location>
</feature>
<feature type="region of interest" description="Disordered" evidence="3">
    <location>
        <begin position="306"/>
        <end position="363"/>
    </location>
</feature>
<feature type="compositionally biased region" description="Gly residues" evidence="3">
    <location>
        <begin position="310"/>
        <end position="319"/>
    </location>
</feature>
<feature type="compositionally biased region" description="Acidic residues" evidence="3">
    <location>
        <begin position="322"/>
        <end position="347"/>
    </location>
</feature>
<feature type="compositionally biased region" description="Basic and acidic residues" evidence="3">
    <location>
        <begin position="348"/>
        <end position="363"/>
    </location>
</feature>
<feature type="active site" description="Proton acceptor" evidence="1 2">
    <location>
        <position position="123"/>
    </location>
</feature>
<feature type="binding site" evidence="1">
    <location>
        <begin position="10"/>
        <end position="18"/>
    </location>
    <ligand>
        <name>ATP</name>
        <dbReference type="ChEBI" id="CHEBI:30616"/>
    </ligand>
</feature>
<feature type="binding site" evidence="1">
    <location>
        <position position="33"/>
    </location>
    <ligand>
        <name>ATP</name>
        <dbReference type="ChEBI" id="CHEBI:30616"/>
    </ligand>
</feature>
<dbReference type="EC" id="2.7.11.1"/>
<dbReference type="EMBL" id="M91548">
    <property type="protein sequence ID" value="AAA02840.1"/>
    <property type="molecule type" value="mRNA"/>
</dbReference>
<dbReference type="EMBL" id="U95973">
    <property type="protein sequence ID" value="AAB65483.1"/>
    <property type="molecule type" value="Genomic_DNA"/>
</dbReference>
<dbReference type="EMBL" id="CP002684">
    <property type="protein sequence ID" value="AEE28666.1"/>
    <property type="molecule type" value="Genomic_DNA"/>
</dbReference>
<dbReference type="EMBL" id="AY093130">
    <property type="protein sequence ID" value="AAM13129.1"/>
    <property type="molecule type" value="mRNA"/>
</dbReference>
<dbReference type="EMBL" id="BT008850">
    <property type="protein sequence ID" value="AAP68289.1"/>
    <property type="molecule type" value="mRNA"/>
</dbReference>
<dbReference type="EMBL" id="AY084221">
    <property type="protein sequence ID" value="AAM60822.1"/>
    <property type="molecule type" value="mRNA"/>
</dbReference>
<dbReference type="PIR" id="S36944">
    <property type="entry name" value="S36944"/>
</dbReference>
<dbReference type="RefSeq" id="NP_172563.1">
    <molecule id="P43291-1"/>
    <property type="nucleotide sequence ID" value="NM_100969.4"/>
</dbReference>
<dbReference type="SMR" id="P43291"/>
<dbReference type="BioGRID" id="22877">
    <property type="interactions" value="8"/>
</dbReference>
<dbReference type="DIP" id="DIP-31342N"/>
<dbReference type="FunCoup" id="P43291">
    <property type="interactions" value="2144"/>
</dbReference>
<dbReference type="IntAct" id="P43291">
    <property type="interactions" value="15"/>
</dbReference>
<dbReference type="STRING" id="3702.P43291"/>
<dbReference type="iPTMnet" id="P43291"/>
<dbReference type="PaxDb" id="3702-AT1G10940.2"/>
<dbReference type="EnsemblPlants" id="AT1G10940.1">
    <molecule id="P43291-1"/>
    <property type="protein sequence ID" value="AT1G10940.1"/>
    <property type="gene ID" value="AT1G10940"/>
</dbReference>
<dbReference type="GeneID" id="837637"/>
<dbReference type="Gramene" id="AT1G10940.1">
    <molecule id="P43291-1"/>
    <property type="protein sequence ID" value="AT1G10940.1"/>
    <property type="gene ID" value="AT1G10940"/>
</dbReference>
<dbReference type="KEGG" id="ath:AT1G10940"/>
<dbReference type="Araport" id="AT1G10940"/>
<dbReference type="TAIR" id="AT1G10940">
    <property type="gene designation" value="SNRK2.4"/>
</dbReference>
<dbReference type="eggNOG" id="KOG0583">
    <property type="taxonomic scope" value="Eukaryota"/>
</dbReference>
<dbReference type="HOGENOM" id="CLU_000288_63_0_1"/>
<dbReference type="InParanoid" id="P43291"/>
<dbReference type="PhylomeDB" id="P43291"/>
<dbReference type="BRENDA" id="2.7.11.1">
    <property type="organism ID" value="399"/>
</dbReference>
<dbReference type="PRO" id="PR:P43291"/>
<dbReference type="Proteomes" id="UP000006548">
    <property type="component" value="Chromosome 1"/>
</dbReference>
<dbReference type="ExpressionAtlas" id="P43291">
    <property type="expression patterns" value="baseline and differential"/>
</dbReference>
<dbReference type="GO" id="GO:0005524">
    <property type="term" value="F:ATP binding"/>
    <property type="evidence" value="ECO:0007669"/>
    <property type="project" value="UniProtKB-KW"/>
</dbReference>
<dbReference type="GO" id="GO:0106310">
    <property type="term" value="F:protein serine kinase activity"/>
    <property type="evidence" value="ECO:0007669"/>
    <property type="project" value="RHEA"/>
</dbReference>
<dbReference type="GO" id="GO:0004674">
    <property type="term" value="F:protein serine/threonine kinase activity"/>
    <property type="evidence" value="ECO:0007669"/>
    <property type="project" value="UniProtKB-KW"/>
</dbReference>
<dbReference type="GO" id="GO:0006970">
    <property type="term" value="P:response to osmotic stress"/>
    <property type="evidence" value="ECO:0007669"/>
    <property type="project" value="UniProtKB-ARBA"/>
</dbReference>
<dbReference type="CDD" id="cd14662">
    <property type="entry name" value="STKc_SnRK2"/>
    <property type="match status" value="1"/>
</dbReference>
<dbReference type="FunFam" id="1.10.510.10:FF:000132">
    <property type="entry name" value="Serine/threonine-protein kinase SRK2A"/>
    <property type="match status" value="1"/>
</dbReference>
<dbReference type="FunFam" id="3.30.200.20:FF:000045">
    <property type="entry name" value="Serine/threonine-protein kinase SRK2E"/>
    <property type="match status" value="1"/>
</dbReference>
<dbReference type="Gene3D" id="3.30.200.20">
    <property type="entry name" value="Phosphorylase Kinase, domain 1"/>
    <property type="match status" value="1"/>
</dbReference>
<dbReference type="Gene3D" id="1.10.510.10">
    <property type="entry name" value="Transferase(Phosphotransferase) domain 1"/>
    <property type="match status" value="1"/>
</dbReference>
<dbReference type="InterPro" id="IPR011009">
    <property type="entry name" value="Kinase-like_dom_sf"/>
</dbReference>
<dbReference type="InterPro" id="IPR000719">
    <property type="entry name" value="Prot_kinase_dom"/>
</dbReference>
<dbReference type="InterPro" id="IPR017441">
    <property type="entry name" value="Protein_kinase_ATP_BS"/>
</dbReference>
<dbReference type="InterPro" id="IPR008271">
    <property type="entry name" value="Ser/Thr_kinase_AS"/>
</dbReference>
<dbReference type="PANTHER" id="PTHR24343">
    <property type="entry name" value="SERINE/THREONINE KINASE"/>
    <property type="match status" value="1"/>
</dbReference>
<dbReference type="PANTHER" id="PTHR24343:SF376">
    <property type="entry name" value="SERINE_THREONINE-PROTEIN KINASE SRK2A-RELATED"/>
    <property type="match status" value="1"/>
</dbReference>
<dbReference type="Pfam" id="PF00069">
    <property type="entry name" value="Pkinase"/>
    <property type="match status" value="1"/>
</dbReference>
<dbReference type="SMART" id="SM00220">
    <property type="entry name" value="S_TKc"/>
    <property type="match status" value="1"/>
</dbReference>
<dbReference type="SUPFAM" id="SSF56112">
    <property type="entry name" value="Protein kinase-like (PK-like)"/>
    <property type="match status" value="1"/>
</dbReference>
<dbReference type="PROSITE" id="PS00107">
    <property type="entry name" value="PROTEIN_KINASE_ATP"/>
    <property type="match status" value="1"/>
</dbReference>
<dbReference type="PROSITE" id="PS50011">
    <property type="entry name" value="PROTEIN_KINASE_DOM"/>
    <property type="match status" value="1"/>
</dbReference>
<dbReference type="PROSITE" id="PS00108">
    <property type="entry name" value="PROTEIN_KINASE_ST"/>
    <property type="match status" value="1"/>
</dbReference>
<evidence type="ECO:0000255" key="1">
    <source>
        <dbReference type="PROSITE-ProRule" id="PRU00159"/>
    </source>
</evidence>
<evidence type="ECO:0000255" key="2">
    <source>
        <dbReference type="PROSITE-ProRule" id="PRU10027"/>
    </source>
</evidence>
<evidence type="ECO:0000256" key="3">
    <source>
        <dbReference type="SAM" id="MobiDB-lite"/>
    </source>
</evidence>
<evidence type="ECO:0000269" key="4">
    <source>
    </source>
</evidence>
<evidence type="ECO:0000269" key="5">
    <source>
    </source>
</evidence>
<comment type="catalytic activity">
    <reaction>
        <text>L-seryl-[protein] + ATP = O-phospho-L-seryl-[protein] + ADP + H(+)</text>
        <dbReference type="Rhea" id="RHEA:17989"/>
        <dbReference type="Rhea" id="RHEA-COMP:9863"/>
        <dbReference type="Rhea" id="RHEA-COMP:11604"/>
        <dbReference type="ChEBI" id="CHEBI:15378"/>
        <dbReference type="ChEBI" id="CHEBI:29999"/>
        <dbReference type="ChEBI" id="CHEBI:30616"/>
        <dbReference type="ChEBI" id="CHEBI:83421"/>
        <dbReference type="ChEBI" id="CHEBI:456216"/>
        <dbReference type="EC" id="2.7.11.1"/>
    </reaction>
</comment>
<comment type="catalytic activity">
    <reaction>
        <text>L-threonyl-[protein] + ATP = O-phospho-L-threonyl-[protein] + ADP + H(+)</text>
        <dbReference type="Rhea" id="RHEA:46608"/>
        <dbReference type="Rhea" id="RHEA-COMP:11060"/>
        <dbReference type="Rhea" id="RHEA-COMP:11605"/>
        <dbReference type="ChEBI" id="CHEBI:15378"/>
        <dbReference type="ChEBI" id="CHEBI:30013"/>
        <dbReference type="ChEBI" id="CHEBI:30616"/>
        <dbReference type="ChEBI" id="CHEBI:61977"/>
        <dbReference type="ChEBI" id="CHEBI:456216"/>
        <dbReference type="EC" id="2.7.11.1"/>
    </reaction>
</comment>
<comment type="subunit">
    <text evidence="5">Interacts with TOPP1.</text>
</comment>
<comment type="interaction">
    <interactant intactId="EBI-401164">
        <id>P43291</id>
    </interactant>
    <interactant intactId="EBI-1778690">
        <id>Q9SJN0</id>
        <label>ABI5</label>
    </interactant>
    <organismsDiffer>false</organismsDiffer>
    <experiments>3</experiments>
</comment>
<comment type="interaction">
    <interactant intactId="EBI-401164">
        <id>P43291</id>
    </interactant>
    <interactant intactId="EBI-401198">
        <id>Q9SKK0</id>
        <label>EBF1</label>
    </interactant>
    <organismsDiffer>false</organismsDiffer>
    <experiments>2</experiments>
</comment>
<comment type="interaction">
    <interactant intactId="EBI-401164">
        <id>P43291</id>
    </interactant>
    <interactant intactId="EBI-593623">
        <id>Q708Y0</id>
        <label>EBF2</label>
    </interactant>
    <organismsDiffer>false</organismsDiffer>
    <experiments>2</experiments>
</comment>
<comment type="interaction">
    <interactant intactId="EBI-401164">
        <id>P43291</id>
    </interactant>
    <interactant intactId="EBI-590758">
        <id>Q39090</id>
        <label>UFO</label>
    </interactant>
    <organismsDiffer>false</organismsDiffer>
    <experiments>3</experiments>
</comment>
<comment type="alternative products">
    <event type="alternative splicing"/>
    <isoform>
        <id>P43291-1</id>
        <name>1</name>
        <sequence type="displayed"/>
    </isoform>
    <text>A number of isoforms are produced. According to EST sequences.</text>
</comment>
<comment type="tissue specificity">
    <text evidence="4">Expressed in seedlings.</text>
</comment>
<comment type="induction">
    <text evidence="4">By abscisic acid (ABA), salt, and osmotic stress (at protein level).</text>
</comment>
<comment type="similarity">
    <text evidence="1">Belongs to the protein kinase superfamily. Ser/Thr protein kinase family.</text>
</comment>
<sequence length="363" mass="41169">MDKYELVKDIGAGNFGVARLMKVKNSKELVAMKYIERGPKIDENVAREIINHRSLRHPNIIRFKEVVLTPTHLAIAMEYAAGGELFERICSAGRFSEDEARYFFQQLISGVSYCHAMQICHRDLKLENTLLDGSPAPRLKICDFGYSKSSLLHSRPKSTVGTPAYIAPEVLSRREYDGKMADVWSCGVTLYVMLVGAYPFEDQEDPKNFRKTIQKIMAVQYKIPDYVHISQDCKNLLSRIFVANSLKRITIAEIKKHSWFLKNLPRELTETAQAAYFKKENPTFSLQTVEEIMKIVADAKTPPPVSRSIGGFGWGGNGDADGKEEDAEDVEEEEEEVEEEEDDEDEYDKTVKEVHASGEVRIS</sequence>
<protein>
    <recommendedName>
        <fullName>Serine/threonine-protein kinase SRK2A</fullName>
        <ecNumber>2.7.11.1</ecNumber>
    </recommendedName>
    <alternativeName>
        <fullName>Arabidopsis protein SK1</fullName>
    </alternativeName>
    <alternativeName>
        <fullName>OST1-kinase-like 7</fullName>
    </alternativeName>
    <alternativeName>
        <fullName>SNF1-related kinase 2.4</fullName>
        <shortName>SnRK2.4</shortName>
    </alternativeName>
</protein>
<reference key="1">
    <citation type="journal article" date="1993" name="Plant Mol. Biol.">
        <title>Two putative protein kinases from Arabidopsis thaliana contain highly acidic domains.</title>
        <authorList>
            <person name="Park Y.S."/>
            <person name="Hong S.W."/>
            <person name="Oh S.A."/>
            <person name="Kwak J.M."/>
            <person name="Lee H.H."/>
            <person name="Nam H.G."/>
        </authorList>
    </citation>
    <scope>NUCLEOTIDE SEQUENCE [MRNA]</scope>
    <source>
        <strain>cv. Columbia</strain>
        <tissue>Leaf</tissue>
    </source>
</reference>
<reference key="2">
    <citation type="journal article" date="2000" name="Nature">
        <title>Sequence and analysis of chromosome 1 of the plant Arabidopsis thaliana.</title>
        <authorList>
            <person name="Theologis A."/>
            <person name="Ecker J.R."/>
            <person name="Palm C.J."/>
            <person name="Federspiel N.A."/>
            <person name="Kaul S."/>
            <person name="White O."/>
            <person name="Alonso J."/>
            <person name="Altafi H."/>
            <person name="Araujo R."/>
            <person name="Bowman C.L."/>
            <person name="Brooks S.Y."/>
            <person name="Buehler E."/>
            <person name="Chan A."/>
            <person name="Chao Q."/>
            <person name="Chen H."/>
            <person name="Cheuk R.F."/>
            <person name="Chin C.W."/>
            <person name="Chung M.K."/>
            <person name="Conn L."/>
            <person name="Conway A.B."/>
            <person name="Conway A.R."/>
            <person name="Creasy T.H."/>
            <person name="Dewar K."/>
            <person name="Dunn P."/>
            <person name="Etgu P."/>
            <person name="Feldblyum T.V."/>
            <person name="Feng J.-D."/>
            <person name="Fong B."/>
            <person name="Fujii C.Y."/>
            <person name="Gill J.E."/>
            <person name="Goldsmith A.D."/>
            <person name="Haas B."/>
            <person name="Hansen N.F."/>
            <person name="Hughes B."/>
            <person name="Huizar L."/>
            <person name="Hunter J.L."/>
            <person name="Jenkins J."/>
            <person name="Johnson-Hopson C."/>
            <person name="Khan S."/>
            <person name="Khaykin E."/>
            <person name="Kim C.J."/>
            <person name="Koo H.L."/>
            <person name="Kremenetskaia I."/>
            <person name="Kurtz D.B."/>
            <person name="Kwan A."/>
            <person name="Lam B."/>
            <person name="Langin-Hooper S."/>
            <person name="Lee A."/>
            <person name="Lee J.M."/>
            <person name="Lenz C.A."/>
            <person name="Li J.H."/>
            <person name="Li Y.-P."/>
            <person name="Lin X."/>
            <person name="Liu S.X."/>
            <person name="Liu Z.A."/>
            <person name="Luros J.S."/>
            <person name="Maiti R."/>
            <person name="Marziali A."/>
            <person name="Militscher J."/>
            <person name="Miranda M."/>
            <person name="Nguyen M."/>
            <person name="Nierman W.C."/>
            <person name="Osborne B.I."/>
            <person name="Pai G."/>
            <person name="Peterson J."/>
            <person name="Pham P.K."/>
            <person name="Rizzo M."/>
            <person name="Rooney T."/>
            <person name="Rowley D."/>
            <person name="Sakano H."/>
            <person name="Salzberg S.L."/>
            <person name="Schwartz J.R."/>
            <person name="Shinn P."/>
            <person name="Southwick A.M."/>
            <person name="Sun H."/>
            <person name="Tallon L.J."/>
            <person name="Tambunga G."/>
            <person name="Toriumi M.J."/>
            <person name="Town C.D."/>
            <person name="Utterback T."/>
            <person name="Van Aken S."/>
            <person name="Vaysberg M."/>
            <person name="Vysotskaia V.S."/>
            <person name="Walker M."/>
            <person name="Wu D."/>
            <person name="Yu G."/>
            <person name="Fraser C.M."/>
            <person name="Venter J.C."/>
            <person name="Davis R.W."/>
        </authorList>
    </citation>
    <scope>NUCLEOTIDE SEQUENCE [LARGE SCALE GENOMIC DNA]</scope>
    <source>
        <strain>cv. Columbia</strain>
    </source>
</reference>
<reference key="3">
    <citation type="journal article" date="2017" name="Plant J.">
        <title>Araport11: a complete reannotation of the Arabidopsis thaliana reference genome.</title>
        <authorList>
            <person name="Cheng C.Y."/>
            <person name="Krishnakumar V."/>
            <person name="Chan A.P."/>
            <person name="Thibaud-Nissen F."/>
            <person name="Schobel S."/>
            <person name="Town C.D."/>
        </authorList>
    </citation>
    <scope>GENOME REANNOTATION</scope>
    <source>
        <strain>cv. Columbia</strain>
    </source>
</reference>
<reference key="4">
    <citation type="journal article" date="2003" name="Science">
        <title>Empirical analysis of transcriptional activity in the Arabidopsis genome.</title>
        <authorList>
            <person name="Yamada K."/>
            <person name="Lim J."/>
            <person name="Dale J.M."/>
            <person name="Chen H."/>
            <person name="Shinn P."/>
            <person name="Palm C.J."/>
            <person name="Southwick A.M."/>
            <person name="Wu H.C."/>
            <person name="Kim C.J."/>
            <person name="Nguyen M."/>
            <person name="Pham P.K."/>
            <person name="Cheuk R.F."/>
            <person name="Karlin-Newmann G."/>
            <person name="Liu S.X."/>
            <person name="Lam B."/>
            <person name="Sakano H."/>
            <person name="Wu T."/>
            <person name="Yu G."/>
            <person name="Miranda M."/>
            <person name="Quach H.L."/>
            <person name="Tripp M."/>
            <person name="Chang C.H."/>
            <person name="Lee J.M."/>
            <person name="Toriumi M.J."/>
            <person name="Chan M.M."/>
            <person name="Tang C.C."/>
            <person name="Onodera C.S."/>
            <person name="Deng J.M."/>
            <person name="Akiyama K."/>
            <person name="Ansari Y."/>
            <person name="Arakawa T."/>
            <person name="Banh J."/>
            <person name="Banno F."/>
            <person name="Bowser L."/>
            <person name="Brooks S.Y."/>
            <person name="Carninci P."/>
            <person name="Chao Q."/>
            <person name="Choy N."/>
            <person name="Enju A."/>
            <person name="Goldsmith A.D."/>
            <person name="Gurjal M."/>
            <person name="Hansen N.F."/>
            <person name="Hayashizaki Y."/>
            <person name="Johnson-Hopson C."/>
            <person name="Hsuan V.W."/>
            <person name="Iida K."/>
            <person name="Karnes M."/>
            <person name="Khan S."/>
            <person name="Koesema E."/>
            <person name="Ishida J."/>
            <person name="Jiang P.X."/>
            <person name="Jones T."/>
            <person name="Kawai J."/>
            <person name="Kamiya A."/>
            <person name="Meyers C."/>
            <person name="Nakajima M."/>
            <person name="Narusaka M."/>
            <person name="Seki M."/>
            <person name="Sakurai T."/>
            <person name="Satou M."/>
            <person name="Tamse R."/>
            <person name="Vaysberg M."/>
            <person name="Wallender E.K."/>
            <person name="Wong C."/>
            <person name="Yamamura Y."/>
            <person name="Yuan S."/>
            <person name="Shinozaki K."/>
            <person name="Davis R.W."/>
            <person name="Theologis A."/>
            <person name="Ecker J.R."/>
        </authorList>
    </citation>
    <scope>NUCLEOTIDE SEQUENCE [LARGE SCALE MRNA]</scope>
    <source>
        <strain>cv. Columbia</strain>
    </source>
</reference>
<reference key="5">
    <citation type="submission" date="2002-03" db="EMBL/GenBank/DDBJ databases">
        <title>Full-length cDNA from Arabidopsis thaliana.</title>
        <authorList>
            <person name="Brover V.V."/>
            <person name="Troukhan M.E."/>
            <person name="Alexandrov N.A."/>
            <person name="Lu Y.-P."/>
            <person name="Flavell R.B."/>
            <person name="Feldmann K.A."/>
        </authorList>
    </citation>
    <scope>NUCLEOTIDE SEQUENCE [LARGE SCALE MRNA]</scope>
</reference>
<reference key="6">
    <citation type="journal article" date="2003" name="Plant Physiol.">
        <title>The Arabidopsis CDPK-SnRK superfamily of protein kinases.</title>
        <authorList>
            <person name="Hrabak E.M."/>
            <person name="Chan C.W.M."/>
            <person name="Gribskov M."/>
            <person name="Harper J.F."/>
            <person name="Choi J.H."/>
            <person name="Halford N."/>
            <person name="Kudla J."/>
            <person name="Luan S."/>
            <person name="Nimmo H.G."/>
            <person name="Sussman M.R."/>
            <person name="Thomas M."/>
            <person name="Walker-Simmons K."/>
            <person name="Zhu J.-K."/>
            <person name="Harmon A.C."/>
        </authorList>
    </citation>
    <scope>GENE FAMILY</scope>
    <scope>NOMENCLATURE</scope>
</reference>
<reference key="7">
    <citation type="journal article" date="2004" name="J. Biol. Chem.">
        <title>Identification of nine sucrose nonfermenting 1-related protein kinases 2 activated by hyperosmotic and saline stresses in Arabidopsis thaliana.</title>
        <authorList>
            <person name="Boudsocq M."/>
            <person name="Barbier-Brygoo H."/>
            <person name="Lauriere C."/>
        </authorList>
    </citation>
    <scope>TISSUE SPECIFICITY</scope>
    <scope>INDUCTION</scope>
</reference>
<reference key="8">
    <citation type="journal article" date="2006" name="J. Biol. Chem.">
        <title>The regulatory domain of SRK2E/OST1/SnRK2.6 interacts with ABI1 and integrates abscisic acid (ABA) and osmotic stress signals controlling stomatal closure in Arabidopsis.</title>
        <authorList>
            <person name="Yoshida R."/>
            <person name="Umezawa T."/>
            <person name="Mizoguchi T."/>
            <person name="Takahashi S."/>
            <person name="Takahashi F."/>
            <person name="Shinozaki K."/>
        </authorList>
    </citation>
    <scope>GENE FAMILY</scope>
</reference>
<reference key="9">
    <citation type="journal article" date="2016" name="PLoS Genet.">
        <title>Type one protein phosphatase 1 and its regulatory protein inhibitor 2 negatively regulate ABA signaling.</title>
        <authorList>
            <person name="Hou Y.J."/>
            <person name="Zhu Y."/>
            <person name="Wang P."/>
            <person name="Zhao Y."/>
            <person name="Xie S."/>
            <person name="Batelli G."/>
            <person name="Wang B."/>
            <person name="Duan C.G."/>
            <person name="Wang X."/>
            <person name="Xing L."/>
            <person name="Lei M."/>
            <person name="Yan J."/>
            <person name="Zhu X."/>
            <person name="Zhu J.K."/>
        </authorList>
    </citation>
    <scope>INTERACTION WITH TOPP1</scope>
</reference>